<feature type="chain" id="PRO_1000091784" description="Elongation factor G">
    <location>
        <begin position="1"/>
        <end position="702"/>
    </location>
</feature>
<feature type="domain" description="tr-type G">
    <location>
        <begin position="8"/>
        <end position="290"/>
    </location>
</feature>
<feature type="binding site" evidence="1">
    <location>
        <begin position="17"/>
        <end position="24"/>
    </location>
    <ligand>
        <name>GTP</name>
        <dbReference type="ChEBI" id="CHEBI:37565"/>
    </ligand>
</feature>
<feature type="binding site" evidence="1">
    <location>
        <begin position="88"/>
        <end position="92"/>
    </location>
    <ligand>
        <name>GTP</name>
        <dbReference type="ChEBI" id="CHEBI:37565"/>
    </ligand>
</feature>
<feature type="binding site" evidence="1">
    <location>
        <begin position="142"/>
        <end position="145"/>
    </location>
    <ligand>
        <name>GTP</name>
        <dbReference type="ChEBI" id="CHEBI:37565"/>
    </ligand>
</feature>
<protein>
    <recommendedName>
        <fullName evidence="1">Elongation factor G</fullName>
        <shortName evidence="1">EF-G</shortName>
    </recommendedName>
</protein>
<comment type="function">
    <text evidence="1">Catalyzes the GTP-dependent ribosomal translocation step during translation elongation. During this step, the ribosome changes from the pre-translocational (PRE) to the post-translocational (POST) state as the newly formed A-site-bound peptidyl-tRNA and P-site-bound deacylated tRNA move to the P and E sites, respectively. Catalyzes the coordinated movement of the two tRNA molecules, the mRNA and conformational changes in the ribosome.</text>
</comment>
<comment type="subcellular location">
    <subcellularLocation>
        <location evidence="1">Cytoplasm</location>
    </subcellularLocation>
</comment>
<comment type="similarity">
    <text evidence="1">Belongs to the TRAFAC class translation factor GTPase superfamily. Classic translation factor GTPase family. EF-G/EF-2 subfamily.</text>
</comment>
<keyword id="KW-0963">Cytoplasm</keyword>
<keyword id="KW-0251">Elongation factor</keyword>
<keyword id="KW-0342">GTP-binding</keyword>
<keyword id="KW-0547">Nucleotide-binding</keyword>
<keyword id="KW-0648">Protein biosynthesis</keyword>
<gene>
    <name evidence="1" type="primary">fusA</name>
    <name type="ordered locus">YPTS_3895</name>
</gene>
<accession>B2K5N5</accession>
<reference key="1">
    <citation type="submission" date="2008-04" db="EMBL/GenBank/DDBJ databases">
        <title>Complete sequence of Yersinia pseudotuberculosis PB1/+.</title>
        <authorList>
            <person name="Copeland A."/>
            <person name="Lucas S."/>
            <person name="Lapidus A."/>
            <person name="Glavina del Rio T."/>
            <person name="Dalin E."/>
            <person name="Tice H."/>
            <person name="Bruce D."/>
            <person name="Goodwin L."/>
            <person name="Pitluck S."/>
            <person name="Munk A.C."/>
            <person name="Brettin T."/>
            <person name="Detter J.C."/>
            <person name="Han C."/>
            <person name="Tapia R."/>
            <person name="Schmutz J."/>
            <person name="Larimer F."/>
            <person name="Land M."/>
            <person name="Hauser L."/>
            <person name="Challacombe J.F."/>
            <person name="Green L."/>
            <person name="Lindler L.E."/>
            <person name="Nikolich M.P."/>
            <person name="Richardson P."/>
        </authorList>
    </citation>
    <scope>NUCLEOTIDE SEQUENCE [LARGE SCALE GENOMIC DNA]</scope>
    <source>
        <strain>PB1/+</strain>
    </source>
</reference>
<proteinExistence type="inferred from homology"/>
<dbReference type="EMBL" id="CP001048">
    <property type="protein sequence ID" value="ACC90844.1"/>
    <property type="molecule type" value="Genomic_DNA"/>
</dbReference>
<dbReference type="RefSeq" id="WP_002212325.1">
    <property type="nucleotide sequence ID" value="NZ_CP009780.1"/>
</dbReference>
<dbReference type="SMR" id="B2K5N5"/>
<dbReference type="GeneID" id="96663201"/>
<dbReference type="KEGG" id="ypb:YPTS_3895"/>
<dbReference type="PATRIC" id="fig|502801.10.peg.3360"/>
<dbReference type="GO" id="GO:0005737">
    <property type="term" value="C:cytoplasm"/>
    <property type="evidence" value="ECO:0007669"/>
    <property type="project" value="UniProtKB-SubCell"/>
</dbReference>
<dbReference type="GO" id="GO:0005525">
    <property type="term" value="F:GTP binding"/>
    <property type="evidence" value="ECO:0007669"/>
    <property type="project" value="UniProtKB-UniRule"/>
</dbReference>
<dbReference type="GO" id="GO:0003924">
    <property type="term" value="F:GTPase activity"/>
    <property type="evidence" value="ECO:0007669"/>
    <property type="project" value="InterPro"/>
</dbReference>
<dbReference type="GO" id="GO:0097216">
    <property type="term" value="F:guanosine tetraphosphate binding"/>
    <property type="evidence" value="ECO:0007669"/>
    <property type="project" value="UniProtKB-ARBA"/>
</dbReference>
<dbReference type="GO" id="GO:0003746">
    <property type="term" value="F:translation elongation factor activity"/>
    <property type="evidence" value="ECO:0007669"/>
    <property type="project" value="UniProtKB-UniRule"/>
</dbReference>
<dbReference type="GO" id="GO:0032790">
    <property type="term" value="P:ribosome disassembly"/>
    <property type="evidence" value="ECO:0007669"/>
    <property type="project" value="TreeGrafter"/>
</dbReference>
<dbReference type="CDD" id="cd01886">
    <property type="entry name" value="EF-G"/>
    <property type="match status" value="1"/>
</dbReference>
<dbReference type="CDD" id="cd16262">
    <property type="entry name" value="EFG_III"/>
    <property type="match status" value="1"/>
</dbReference>
<dbReference type="CDD" id="cd01434">
    <property type="entry name" value="EFG_mtEFG1_IV"/>
    <property type="match status" value="1"/>
</dbReference>
<dbReference type="CDD" id="cd03713">
    <property type="entry name" value="EFG_mtEFG_C"/>
    <property type="match status" value="1"/>
</dbReference>
<dbReference type="CDD" id="cd04088">
    <property type="entry name" value="EFG_mtEFG_II"/>
    <property type="match status" value="1"/>
</dbReference>
<dbReference type="FunFam" id="2.40.30.10:FF:000006">
    <property type="entry name" value="Elongation factor G"/>
    <property type="match status" value="1"/>
</dbReference>
<dbReference type="FunFam" id="3.30.230.10:FF:000003">
    <property type="entry name" value="Elongation factor G"/>
    <property type="match status" value="1"/>
</dbReference>
<dbReference type="FunFam" id="3.30.70.240:FF:000001">
    <property type="entry name" value="Elongation factor G"/>
    <property type="match status" value="1"/>
</dbReference>
<dbReference type="FunFam" id="3.30.70.870:FF:000001">
    <property type="entry name" value="Elongation factor G"/>
    <property type="match status" value="1"/>
</dbReference>
<dbReference type="FunFam" id="3.40.50.300:FF:000029">
    <property type="entry name" value="Elongation factor G"/>
    <property type="match status" value="1"/>
</dbReference>
<dbReference type="Gene3D" id="3.30.230.10">
    <property type="match status" value="1"/>
</dbReference>
<dbReference type="Gene3D" id="3.30.70.240">
    <property type="match status" value="1"/>
</dbReference>
<dbReference type="Gene3D" id="3.30.70.870">
    <property type="entry name" value="Elongation Factor G (Translational Gtpase), domain 3"/>
    <property type="match status" value="1"/>
</dbReference>
<dbReference type="Gene3D" id="3.40.50.300">
    <property type="entry name" value="P-loop containing nucleotide triphosphate hydrolases"/>
    <property type="match status" value="1"/>
</dbReference>
<dbReference type="Gene3D" id="2.40.30.10">
    <property type="entry name" value="Translation factors"/>
    <property type="match status" value="1"/>
</dbReference>
<dbReference type="HAMAP" id="MF_00054_B">
    <property type="entry name" value="EF_G_EF_2_B"/>
    <property type="match status" value="1"/>
</dbReference>
<dbReference type="InterPro" id="IPR041095">
    <property type="entry name" value="EFG_II"/>
</dbReference>
<dbReference type="InterPro" id="IPR009022">
    <property type="entry name" value="EFG_III"/>
</dbReference>
<dbReference type="InterPro" id="IPR035647">
    <property type="entry name" value="EFG_III/V"/>
</dbReference>
<dbReference type="InterPro" id="IPR047872">
    <property type="entry name" value="EFG_IV"/>
</dbReference>
<dbReference type="InterPro" id="IPR035649">
    <property type="entry name" value="EFG_V"/>
</dbReference>
<dbReference type="InterPro" id="IPR000640">
    <property type="entry name" value="EFG_V-like"/>
</dbReference>
<dbReference type="InterPro" id="IPR004161">
    <property type="entry name" value="EFTu-like_2"/>
</dbReference>
<dbReference type="InterPro" id="IPR031157">
    <property type="entry name" value="G_TR_CS"/>
</dbReference>
<dbReference type="InterPro" id="IPR027417">
    <property type="entry name" value="P-loop_NTPase"/>
</dbReference>
<dbReference type="InterPro" id="IPR020568">
    <property type="entry name" value="Ribosomal_Su5_D2-typ_SF"/>
</dbReference>
<dbReference type="InterPro" id="IPR014721">
    <property type="entry name" value="Ribsml_uS5_D2-typ_fold_subgr"/>
</dbReference>
<dbReference type="InterPro" id="IPR005225">
    <property type="entry name" value="Small_GTP-bd"/>
</dbReference>
<dbReference type="InterPro" id="IPR000795">
    <property type="entry name" value="T_Tr_GTP-bd_dom"/>
</dbReference>
<dbReference type="InterPro" id="IPR009000">
    <property type="entry name" value="Transl_B-barrel_sf"/>
</dbReference>
<dbReference type="InterPro" id="IPR004540">
    <property type="entry name" value="Transl_elong_EFG/EF2"/>
</dbReference>
<dbReference type="InterPro" id="IPR005517">
    <property type="entry name" value="Transl_elong_EFG/EF2_IV"/>
</dbReference>
<dbReference type="NCBIfam" id="TIGR00484">
    <property type="entry name" value="EF-G"/>
    <property type="match status" value="1"/>
</dbReference>
<dbReference type="NCBIfam" id="NF009381">
    <property type="entry name" value="PRK12740.1-5"/>
    <property type="match status" value="1"/>
</dbReference>
<dbReference type="NCBIfam" id="TIGR00231">
    <property type="entry name" value="small_GTP"/>
    <property type="match status" value="1"/>
</dbReference>
<dbReference type="PANTHER" id="PTHR43261:SF1">
    <property type="entry name" value="RIBOSOME-RELEASING FACTOR 2, MITOCHONDRIAL"/>
    <property type="match status" value="1"/>
</dbReference>
<dbReference type="PANTHER" id="PTHR43261">
    <property type="entry name" value="TRANSLATION ELONGATION FACTOR G-RELATED"/>
    <property type="match status" value="1"/>
</dbReference>
<dbReference type="Pfam" id="PF00679">
    <property type="entry name" value="EFG_C"/>
    <property type="match status" value="1"/>
</dbReference>
<dbReference type="Pfam" id="PF14492">
    <property type="entry name" value="EFG_III"/>
    <property type="match status" value="1"/>
</dbReference>
<dbReference type="Pfam" id="PF03764">
    <property type="entry name" value="EFG_IV"/>
    <property type="match status" value="1"/>
</dbReference>
<dbReference type="Pfam" id="PF00009">
    <property type="entry name" value="GTP_EFTU"/>
    <property type="match status" value="1"/>
</dbReference>
<dbReference type="Pfam" id="PF03144">
    <property type="entry name" value="GTP_EFTU_D2"/>
    <property type="match status" value="1"/>
</dbReference>
<dbReference type="PRINTS" id="PR00315">
    <property type="entry name" value="ELONGATNFCT"/>
</dbReference>
<dbReference type="SMART" id="SM00838">
    <property type="entry name" value="EFG_C"/>
    <property type="match status" value="1"/>
</dbReference>
<dbReference type="SMART" id="SM00889">
    <property type="entry name" value="EFG_IV"/>
    <property type="match status" value="1"/>
</dbReference>
<dbReference type="SUPFAM" id="SSF54980">
    <property type="entry name" value="EF-G C-terminal domain-like"/>
    <property type="match status" value="2"/>
</dbReference>
<dbReference type="SUPFAM" id="SSF52540">
    <property type="entry name" value="P-loop containing nucleoside triphosphate hydrolases"/>
    <property type="match status" value="1"/>
</dbReference>
<dbReference type="SUPFAM" id="SSF54211">
    <property type="entry name" value="Ribosomal protein S5 domain 2-like"/>
    <property type="match status" value="1"/>
</dbReference>
<dbReference type="SUPFAM" id="SSF50447">
    <property type="entry name" value="Translation proteins"/>
    <property type="match status" value="1"/>
</dbReference>
<dbReference type="PROSITE" id="PS00301">
    <property type="entry name" value="G_TR_1"/>
    <property type="match status" value="1"/>
</dbReference>
<dbReference type="PROSITE" id="PS51722">
    <property type="entry name" value="G_TR_2"/>
    <property type="match status" value="1"/>
</dbReference>
<name>EFG_YERPB</name>
<sequence>MARKTPIERYRNIGISAHIDAGKTTTTERILFYTGVNHKIGEVHDGAATMDWMEQEQERGITITSAATTCFWSGMAKQFEPHHVNIIDTPGHVDFTIEVERSMRVLDGAVMVYCAVGGVQPQSETVWRQANKYKVPRIAFVNKMDRMGANFLRVVGQLKSRLGANPVPLQLAIGAEEKFTGIIDLVKMKAINWNEADQGVTFEYEEIPADMAELAAEWHQNLVESAAEASDELMDKYLGGEELTEEEIKKALRQRVLKSEIILVTCGSAFKNKGVQAMLDAVIEYLPAPTDVESINGILDDGKDTPAVRHSDDKEPFSALAFKIATDPFVGNLTFFRVYSGIVNSGDTVLNSVKSQRERLGRIVQMHANKREEIKEVHAGDIAAAIGLKDVTTGDTLCDPNNPIILERMEFPEPVISVAVEPKTKADQEKMGMALGRLAKEDPSFRVWTDEESGQTIIAGMGELHLDILVDRMRREFNVEANVGKPQVAYRETIRETVKDVEGKHAKQSGGRGQYGHVVIDMSPLPPGGVGYEFVNEIVGGSIPKEFIPAVDKGIQEQLKSGPLAGYPVVDVKVRLHYGSYHDVDSSELAFKLAGSIAFKEGFKRAKPVLLEPIMKVEVETPEDYMGDVMGDLNRRRGIIEGMEDTATGKTVRVKVPLSEMFGYATDLRSQTQGRASYSMEFLEYAEAPSNVAKAVIEARGK</sequence>
<evidence type="ECO:0000255" key="1">
    <source>
        <dbReference type="HAMAP-Rule" id="MF_00054"/>
    </source>
</evidence>
<organism>
    <name type="scientific">Yersinia pseudotuberculosis serotype IB (strain PB1/+)</name>
    <dbReference type="NCBI Taxonomy" id="502801"/>
    <lineage>
        <taxon>Bacteria</taxon>
        <taxon>Pseudomonadati</taxon>
        <taxon>Pseudomonadota</taxon>
        <taxon>Gammaproteobacteria</taxon>
        <taxon>Enterobacterales</taxon>
        <taxon>Yersiniaceae</taxon>
        <taxon>Yersinia</taxon>
    </lineage>
</organism>